<gene>
    <name evidence="1" type="primary">slc37a2</name>
    <name evidence="4" type="ORF">TEgg043o11.1</name>
</gene>
<proteinExistence type="evidence at transcript level"/>
<sequence length="499" mass="54298">MRSSLAPAIRLMQSVSRDSCYRGFIIVMTFLFYTCYHMSRKPISIVKGQLHRNCSALPSPPNISANDTTWCSWAPFENSNYKELLGSLDTAFLVSYAIGMFFSGIFGERLPLRYYLSGGMIICGIFTSFMGLGYYWNIHALWYYILFQILNGLAQTTGWPSVVTCMGNWFGKGKRGFIMGIWNSHTAVGNILGSLIAGAFVSTAWGLSFIVPGIIIAAFGIFCFFFLVEYPEDVGCTPPQQPEDTKENLEDMPVSYNSTDTICKSTESNEDDSGNAHTETEHPQAISFFGALRIPGVVEFSLCLLFAKLVSYTFLYWLPLYIANDAQFDPKAAGDLSTLFDVGGIIGGILAGGISDYTGKSAITCTIMLILTAPMLFIYNYLGQTGVSTTVAMLIVCGILVNGPYSLITTAVSADLGTHESLQGNAKALSTVTAIIDGSGSIGAALGPSLAGVLSSRGWNYVFYMLIAADICACLLLVRLVYKEIRTLCGGMRKSYTEM</sequence>
<accession>Q5M7K3</accession>
<comment type="function">
    <text evidence="1">Inorganic phosphate and glucose-6-phosphate antiporter. May transport cytoplasmic glucose-6-phosphate into the lumen of the endoplasmic reticulum and translocate inorganic phosphate into the opposite direction.</text>
</comment>
<comment type="catalytic activity">
    <reaction evidence="1">
        <text>D-glucose 6-phosphate(in) + phosphate(out) = D-glucose 6-phosphate(out) + phosphate(in)</text>
        <dbReference type="Rhea" id="RHEA:71535"/>
        <dbReference type="ChEBI" id="CHEBI:43474"/>
        <dbReference type="ChEBI" id="CHEBI:61548"/>
    </reaction>
</comment>
<comment type="subcellular location">
    <subcellularLocation>
        <location evidence="1">Endoplasmic reticulum membrane</location>
        <topology evidence="2">Multi-pass membrane protein</topology>
    </subcellularLocation>
</comment>
<comment type="similarity">
    <text evidence="3">Belongs to the major facilitator superfamily. Organophosphate:Pi antiporter (OPA) (TC 2.A.1.4) family.</text>
</comment>
<evidence type="ECO:0000250" key="1">
    <source>
        <dbReference type="UniProtKB" id="Q8TED4"/>
    </source>
</evidence>
<evidence type="ECO:0000255" key="2"/>
<evidence type="ECO:0000305" key="3"/>
<evidence type="ECO:0000312" key="4">
    <source>
        <dbReference type="EMBL" id="CAJ83734.1"/>
    </source>
</evidence>
<feature type="chain" id="PRO_0000308326" description="Glucose-6-phosphate exchanger SLC37A2">
    <location>
        <begin position="1"/>
        <end position="499"/>
    </location>
</feature>
<feature type="transmembrane region" description="Helical" evidence="2">
    <location>
        <begin position="21"/>
        <end position="40"/>
    </location>
</feature>
<feature type="transmembrane region" description="Helical" evidence="2">
    <location>
        <begin position="86"/>
        <end position="106"/>
    </location>
</feature>
<feature type="transmembrane region" description="Helical" evidence="2">
    <location>
        <begin position="116"/>
        <end position="136"/>
    </location>
</feature>
<feature type="transmembrane region" description="Helical" evidence="2">
    <location>
        <begin position="138"/>
        <end position="158"/>
    </location>
</feature>
<feature type="transmembrane region" description="Helical" evidence="2">
    <location>
        <begin position="187"/>
        <end position="207"/>
    </location>
</feature>
<feature type="transmembrane region" description="Helical" evidence="2">
    <location>
        <begin position="208"/>
        <end position="228"/>
    </location>
</feature>
<feature type="transmembrane region" description="Helical" evidence="2">
    <location>
        <begin position="302"/>
        <end position="322"/>
    </location>
</feature>
<feature type="transmembrane region" description="Helical" evidence="2">
    <location>
        <begin position="334"/>
        <end position="354"/>
    </location>
</feature>
<feature type="transmembrane region" description="Helical" evidence="2">
    <location>
        <begin position="362"/>
        <end position="382"/>
    </location>
</feature>
<feature type="transmembrane region" description="Helical" evidence="2">
    <location>
        <begin position="391"/>
        <end position="411"/>
    </location>
</feature>
<feature type="transmembrane region" description="Helical" evidence="2">
    <location>
        <begin position="434"/>
        <end position="454"/>
    </location>
</feature>
<feature type="transmembrane region" description="Helical" evidence="2">
    <location>
        <begin position="458"/>
        <end position="478"/>
    </location>
</feature>
<feature type="glycosylation site" description="N-linked (GlcNAc...) asparagine" evidence="2">
    <location>
        <position position="53"/>
    </location>
</feature>
<feature type="glycosylation site" description="N-linked (GlcNAc...) asparagine" evidence="2">
    <location>
        <position position="62"/>
    </location>
</feature>
<feature type="glycosylation site" description="N-linked (GlcNAc...) asparagine" evidence="2">
    <location>
        <position position="66"/>
    </location>
</feature>
<organism>
    <name type="scientific">Xenopus tropicalis</name>
    <name type="common">Western clawed frog</name>
    <name type="synonym">Silurana tropicalis</name>
    <dbReference type="NCBI Taxonomy" id="8364"/>
    <lineage>
        <taxon>Eukaryota</taxon>
        <taxon>Metazoa</taxon>
        <taxon>Chordata</taxon>
        <taxon>Craniata</taxon>
        <taxon>Vertebrata</taxon>
        <taxon>Euteleostomi</taxon>
        <taxon>Amphibia</taxon>
        <taxon>Batrachia</taxon>
        <taxon>Anura</taxon>
        <taxon>Pipoidea</taxon>
        <taxon>Pipidae</taxon>
        <taxon>Xenopodinae</taxon>
        <taxon>Xenopus</taxon>
        <taxon>Silurana</taxon>
    </lineage>
</organism>
<name>G6PT3_XENTR</name>
<reference key="1">
    <citation type="submission" date="2006-10" db="EMBL/GenBank/DDBJ databases">
        <authorList>
            <consortium name="Sanger Xenopus tropicalis EST/cDNA project"/>
        </authorList>
    </citation>
    <scope>NUCLEOTIDE SEQUENCE [LARGE SCALE MRNA]</scope>
    <source>
        <tissue>Egg</tissue>
    </source>
</reference>
<reference key="2">
    <citation type="submission" date="2004-12" db="EMBL/GenBank/DDBJ databases">
        <authorList>
            <consortium name="NIH - Xenopus Gene Collection (XGC) project"/>
        </authorList>
    </citation>
    <scope>NUCLEOTIDE SEQUENCE [LARGE SCALE MRNA]</scope>
    <source>
        <tissue>Embryo</tissue>
    </source>
</reference>
<dbReference type="EMBL" id="CR762105">
    <property type="protein sequence ID" value="CAJ83734.1"/>
    <property type="molecule type" value="mRNA"/>
</dbReference>
<dbReference type="EMBL" id="BC088593">
    <property type="protein sequence ID" value="AAH88593.1"/>
    <property type="molecule type" value="mRNA"/>
</dbReference>
<dbReference type="RefSeq" id="NP_001011395.1">
    <property type="nucleotide sequence ID" value="NM_001011395.1"/>
</dbReference>
<dbReference type="SMR" id="Q5M7K3"/>
<dbReference type="FunCoup" id="Q5M7K3">
    <property type="interactions" value="181"/>
</dbReference>
<dbReference type="STRING" id="8364.ENSXETP00000041572"/>
<dbReference type="GlyCosmos" id="Q5M7K3">
    <property type="glycosylation" value="3 sites, No reported glycans"/>
</dbReference>
<dbReference type="GeneID" id="496867"/>
<dbReference type="KEGG" id="xtr:496867"/>
<dbReference type="AGR" id="Xenbase:XB-GENE-990247"/>
<dbReference type="CTD" id="219855"/>
<dbReference type="Xenbase" id="XB-GENE-990247">
    <property type="gene designation" value="slc37a2"/>
</dbReference>
<dbReference type="InParanoid" id="Q5M7K3"/>
<dbReference type="OMA" id="AMPYLID"/>
<dbReference type="OrthoDB" id="3639251at2759"/>
<dbReference type="Reactome" id="R-XTR-70263">
    <property type="pathway name" value="Gluconeogenesis"/>
</dbReference>
<dbReference type="Proteomes" id="UP000008143">
    <property type="component" value="Chromosome 7"/>
</dbReference>
<dbReference type="Bgee" id="ENSXETG00000003934">
    <property type="expression patterns" value="Expressed in egg cell and 13 other cell types or tissues"/>
</dbReference>
<dbReference type="ExpressionAtlas" id="Q5M7K3">
    <property type="expression patterns" value="baseline"/>
</dbReference>
<dbReference type="GO" id="GO:0005789">
    <property type="term" value="C:endoplasmic reticulum membrane"/>
    <property type="evidence" value="ECO:0000250"/>
    <property type="project" value="UniProtKB"/>
</dbReference>
<dbReference type="GO" id="GO:0061513">
    <property type="term" value="F:glucose 6-phosphate:phosphate antiporter activity"/>
    <property type="evidence" value="ECO:0000250"/>
    <property type="project" value="UniProtKB"/>
</dbReference>
<dbReference type="GO" id="GO:0015760">
    <property type="term" value="P:glucose-6-phosphate transport"/>
    <property type="evidence" value="ECO:0000250"/>
    <property type="project" value="UniProtKB"/>
</dbReference>
<dbReference type="GO" id="GO:0035435">
    <property type="term" value="P:phosphate ion transmembrane transport"/>
    <property type="evidence" value="ECO:0000250"/>
    <property type="project" value="UniProtKB"/>
</dbReference>
<dbReference type="CDD" id="cd17344">
    <property type="entry name" value="MFS_SLC37A1_2"/>
    <property type="match status" value="1"/>
</dbReference>
<dbReference type="FunFam" id="1.20.1250.20:FF:000050">
    <property type="entry name" value="glucose-6-phosphate exchanger SLC37A2 isoform X1"/>
    <property type="match status" value="1"/>
</dbReference>
<dbReference type="FunFam" id="1.20.1250.20:FF:000028">
    <property type="entry name" value="Sugar phosphate exchanger 3 isoform 1"/>
    <property type="match status" value="1"/>
</dbReference>
<dbReference type="Gene3D" id="1.20.1250.20">
    <property type="entry name" value="MFS general substrate transporter like domains"/>
    <property type="match status" value="2"/>
</dbReference>
<dbReference type="InterPro" id="IPR011701">
    <property type="entry name" value="MFS"/>
</dbReference>
<dbReference type="InterPro" id="IPR020846">
    <property type="entry name" value="MFS_dom"/>
</dbReference>
<dbReference type="InterPro" id="IPR036259">
    <property type="entry name" value="MFS_trans_sf"/>
</dbReference>
<dbReference type="InterPro" id="IPR044740">
    <property type="entry name" value="SLC37A1_2"/>
</dbReference>
<dbReference type="InterPro" id="IPR000849">
    <property type="entry name" value="Sugar_P_transporter"/>
</dbReference>
<dbReference type="PANTHER" id="PTHR43184:SF9">
    <property type="entry name" value="GLUCOSE-6-PHOSPHATE EXCHANGER SLC37A2"/>
    <property type="match status" value="1"/>
</dbReference>
<dbReference type="PANTHER" id="PTHR43184">
    <property type="entry name" value="MAJOR FACILITATOR SUPERFAMILY TRANSPORTER 16, ISOFORM B"/>
    <property type="match status" value="1"/>
</dbReference>
<dbReference type="Pfam" id="PF07690">
    <property type="entry name" value="MFS_1"/>
    <property type="match status" value="1"/>
</dbReference>
<dbReference type="PIRSF" id="PIRSF002808">
    <property type="entry name" value="Hexose_phosphate_transp"/>
    <property type="match status" value="1"/>
</dbReference>
<dbReference type="SUPFAM" id="SSF103473">
    <property type="entry name" value="MFS general substrate transporter"/>
    <property type="match status" value="1"/>
</dbReference>
<dbReference type="PROSITE" id="PS50850">
    <property type="entry name" value="MFS"/>
    <property type="match status" value="1"/>
</dbReference>
<keyword id="KW-0050">Antiport</keyword>
<keyword id="KW-0256">Endoplasmic reticulum</keyword>
<keyword id="KW-0325">Glycoprotein</keyword>
<keyword id="KW-0472">Membrane</keyword>
<keyword id="KW-1185">Reference proteome</keyword>
<keyword id="KW-0762">Sugar transport</keyword>
<keyword id="KW-0812">Transmembrane</keyword>
<keyword id="KW-1133">Transmembrane helix</keyword>
<keyword id="KW-0813">Transport</keyword>
<protein>
    <recommendedName>
        <fullName evidence="3">Glucose-6-phosphate exchanger SLC37A2</fullName>
    </recommendedName>
    <alternativeName>
        <fullName evidence="1">Solute carrier family 37 member 2</fullName>
    </alternativeName>
</protein>